<gene>
    <name type="primary">prnC</name>
</gene>
<name>PRNC_PSEFL</name>
<proteinExistence type="predicted"/>
<keyword id="KW-0045">Antibiotic biosynthesis</keyword>
<keyword id="KW-0503">Monooxygenase</keyword>
<keyword id="KW-0560">Oxidoreductase</keyword>
<organism>
    <name type="scientific">Pseudomonas fluorescens</name>
    <dbReference type="NCBI Taxonomy" id="294"/>
    <lineage>
        <taxon>Bacteria</taxon>
        <taxon>Pseudomonadati</taxon>
        <taxon>Pseudomonadota</taxon>
        <taxon>Gammaproteobacteria</taxon>
        <taxon>Pseudomonadales</taxon>
        <taxon>Pseudomonadaceae</taxon>
        <taxon>Pseudomonas</taxon>
    </lineage>
</organism>
<comment type="function">
    <text evidence="1 2">Involved in the biosynthesis of the antifungal antibiotic pyrrolnitrin. Catalyzes the chlorination of monodechloroaminopyrrolnitrin (MDA) at the 3 position to form aminopyrrolnitrin (APRN).</text>
</comment>
<comment type="pathway">
    <text>Antibiotic biosynthesis.</text>
</comment>
<comment type="disruption phenotype">
    <text evidence="1 2">Cells lacking this gene lose the ability to produce pyrrolnitrin and accumulate MDA.</text>
</comment>
<sequence length="567" mass="65038">MTQKSPANEHDSNHFDVIILGSGMSGTQMGAILAKQQFRVLIIEESSHPRFTIGESSIPETSLMNRIIADRYGIPELDHITSFYSTQRYVASSTGIKRNFGFVFHKPGQEHDPKEFTQCVIPELPWGPESHYYRQDVDAYLLQAAIKYGCKVHQKTTVTEYHADKDGVAVTTAQGERFTGRYMIDCGGPRAPLATKFKLREEPCRFKTHSRSLYTHMLGVKPFDDIFKVKGQRWRWHEGTLHHMFEGGWLWVIPFNNHPRSTNNLVSVGLQLDPRVYPKTDISAQQEFDEFLARFPSIGAQFRDAVPVRDWVKTDRLQFSSNACVGDRYCLMLHANGFIDPLFSRGLENTAVTIHALAARLIKALRDDDFSPERFEYIERLQQKLLDHNDDFVSCCYTAFSDFRLWDAFHRLWAVGTILGQFRLVQAHARFRASRNEGDLDHLDNDPPYLGYLCADMEEYYQLFNDAKAEVEAVSAGRKPADEAAARIHALIDERDFAKPMFGFGYCITGDKPQLNNSKYSLLPAMRLMYWTQTRAPAEVKKYFDYNPMFALLKAYITTRIGLALKK</sequence>
<evidence type="ECO:0000269" key="1">
    <source>
    </source>
</evidence>
<evidence type="ECO:0000269" key="2">
    <source>
    </source>
</evidence>
<protein>
    <recommendedName>
        <fullName>Monodechloroaminopyrrolnitrin halogenase PrnC</fullName>
        <ecNumber>1.14.14.-</ecNumber>
    </recommendedName>
</protein>
<feature type="chain" id="PRO_0000422332" description="Monodechloroaminopyrrolnitrin halogenase PrnC">
    <location>
        <begin position="1"/>
        <end position="567"/>
    </location>
</feature>
<reference key="1">
    <citation type="journal article" date="1997" name="Appl. Environ. Microbiol.">
        <title>Four genes from Pseudomonas fluorescens that encode the biosynthesis of pyrrolnitrin.</title>
        <authorList>
            <person name="Hammer P.E."/>
            <person name="Hill D.S."/>
            <person name="Lam S.T."/>
            <person name="Van Pee K.H."/>
            <person name="Ligon J.M."/>
        </authorList>
    </citation>
    <scope>NUCLEOTIDE SEQUENCE [GENOMIC DNA]</scope>
    <scope>FUNCTION</scope>
    <scope>DISRUPTION PHENOTYPE</scope>
    <scope>NOMENCLATURE</scope>
    <source>
        <strain>Bl915</strain>
    </source>
</reference>
<reference key="2">
    <citation type="journal article" date="1998" name="J. Bacteriol.">
        <title>Functions encoded by pyrrolnitrin biosynthetic genes from Pseudomonas fluorescens.</title>
        <authorList>
            <person name="Kirner S."/>
            <person name="Hammer P.E."/>
            <person name="Hill D.S."/>
            <person name="Altmann A."/>
            <person name="Fischer I."/>
            <person name="Weislo L.J."/>
            <person name="Lanahan M."/>
            <person name="van Pee K.H."/>
            <person name="Ligon J.M."/>
        </authorList>
    </citation>
    <scope>NUCLEOTIDE SEQUENCE [GENOMIC DNA]</scope>
    <scope>FUNCTION</scope>
    <scope>DISRUPTION PHENOTYPE</scope>
    <source>
        <strain>Bl915</strain>
    </source>
</reference>
<dbReference type="EC" id="1.14.14.-"/>
<dbReference type="EMBL" id="U74493">
    <property type="protein sequence ID" value="AAB97506.1"/>
    <property type="molecule type" value="Genomic_DNA"/>
</dbReference>
<dbReference type="SMR" id="P95482"/>
<dbReference type="KEGG" id="ag:AAB97506"/>
<dbReference type="BioCyc" id="MetaCyc:MONOMER-16707"/>
<dbReference type="GO" id="GO:0004497">
    <property type="term" value="F:monooxygenase activity"/>
    <property type="evidence" value="ECO:0007669"/>
    <property type="project" value="UniProtKB-KW"/>
</dbReference>
<dbReference type="GO" id="GO:0017000">
    <property type="term" value="P:antibiotic biosynthetic process"/>
    <property type="evidence" value="ECO:0007669"/>
    <property type="project" value="UniProtKB-KW"/>
</dbReference>
<dbReference type="Gene3D" id="3.50.50.60">
    <property type="entry name" value="FAD/NAD(P)-binding domain"/>
    <property type="match status" value="1"/>
</dbReference>
<dbReference type="InterPro" id="IPR036188">
    <property type="entry name" value="FAD/NAD-bd_sf"/>
</dbReference>
<dbReference type="InterPro" id="IPR050816">
    <property type="entry name" value="Flavin-dep_Halogenase_NPB"/>
</dbReference>
<dbReference type="InterPro" id="IPR006905">
    <property type="entry name" value="Flavin_halogenase"/>
</dbReference>
<dbReference type="PANTHER" id="PTHR43747:SF5">
    <property type="entry name" value="FAD-BINDING DOMAIN-CONTAINING PROTEIN"/>
    <property type="match status" value="1"/>
</dbReference>
<dbReference type="PANTHER" id="PTHR43747">
    <property type="entry name" value="FAD-BINDING PROTEIN"/>
    <property type="match status" value="1"/>
</dbReference>
<dbReference type="Pfam" id="PF04820">
    <property type="entry name" value="Trp_halogenase"/>
    <property type="match status" value="1"/>
</dbReference>
<dbReference type="SUPFAM" id="SSF51905">
    <property type="entry name" value="FAD/NAD(P)-binding domain"/>
    <property type="match status" value="1"/>
</dbReference>
<accession>P95482</accession>